<reference key="1">
    <citation type="submission" date="2007-10" db="EMBL/GenBank/DDBJ databases">
        <title>Complete sequence of Salinispora arenicola CNS-205.</title>
        <authorList>
            <consortium name="US DOE Joint Genome Institute"/>
            <person name="Copeland A."/>
            <person name="Lucas S."/>
            <person name="Lapidus A."/>
            <person name="Barry K."/>
            <person name="Glavina del Rio T."/>
            <person name="Dalin E."/>
            <person name="Tice H."/>
            <person name="Pitluck S."/>
            <person name="Foster B."/>
            <person name="Schmutz J."/>
            <person name="Larimer F."/>
            <person name="Land M."/>
            <person name="Hauser L."/>
            <person name="Kyrpides N."/>
            <person name="Ivanova N."/>
            <person name="Jensen P.R."/>
            <person name="Moore B.S."/>
            <person name="Penn K."/>
            <person name="Jenkins C."/>
            <person name="Udwary D."/>
            <person name="Xiang L."/>
            <person name="Gontang E."/>
            <person name="Richardson P."/>
        </authorList>
    </citation>
    <scope>NUCLEOTIDE SEQUENCE [LARGE SCALE GENOMIC DNA]</scope>
    <source>
        <strain>CNS-205</strain>
    </source>
</reference>
<comment type="function">
    <text evidence="1">Bifunctional enzyme that catalyzes both the deamination of dCTP to dUTP and the hydrolysis of dUTP to dUMP without releasing the toxic dUTP intermediate.</text>
</comment>
<comment type="catalytic activity">
    <reaction evidence="1">
        <text>dCTP + 2 H2O = dUMP + NH4(+) + diphosphate</text>
        <dbReference type="Rhea" id="RHEA:19205"/>
        <dbReference type="ChEBI" id="CHEBI:15377"/>
        <dbReference type="ChEBI" id="CHEBI:28938"/>
        <dbReference type="ChEBI" id="CHEBI:33019"/>
        <dbReference type="ChEBI" id="CHEBI:61481"/>
        <dbReference type="ChEBI" id="CHEBI:246422"/>
        <dbReference type="EC" id="3.5.4.30"/>
    </reaction>
</comment>
<comment type="pathway">
    <text evidence="1">Pyrimidine metabolism; dUMP biosynthesis; dUMP from dCTP: step 1/1.</text>
</comment>
<comment type="subunit">
    <text evidence="1">Homotrimer.</text>
</comment>
<comment type="similarity">
    <text evidence="1">Belongs to the dCTP deaminase family.</text>
</comment>
<evidence type="ECO:0000255" key="1">
    <source>
        <dbReference type="HAMAP-Rule" id="MF_00146"/>
    </source>
</evidence>
<evidence type="ECO:0000256" key="2">
    <source>
        <dbReference type="SAM" id="MobiDB-lite"/>
    </source>
</evidence>
<name>DCDB_SALAI</name>
<accession>A8LWH4</accession>
<organism>
    <name type="scientific">Salinispora arenicola (strain CNS-205)</name>
    <dbReference type="NCBI Taxonomy" id="391037"/>
    <lineage>
        <taxon>Bacteria</taxon>
        <taxon>Bacillati</taxon>
        <taxon>Actinomycetota</taxon>
        <taxon>Actinomycetes</taxon>
        <taxon>Micromonosporales</taxon>
        <taxon>Micromonosporaceae</taxon>
        <taxon>Salinispora</taxon>
    </lineage>
</organism>
<feature type="chain" id="PRO_1000076627" description="dCTP deaminase, dUMP-forming">
    <location>
        <begin position="1"/>
        <end position="192"/>
    </location>
</feature>
<feature type="region of interest" description="Disordered" evidence="2">
    <location>
        <begin position="171"/>
        <end position="192"/>
    </location>
</feature>
<feature type="active site" description="Proton donor/acceptor" evidence="1">
    <location>
        <position position="129"/>
    </location>
</feature>
<feature type="binding site" evidence="1">
    <location>
        <begin position="101"/>
        <end position="106"/>
    </location>
    <ligand>
        <name>dCTP</name>
        <dbReference type="ChEBI" id="CHEBI:61481"/>
    </ligand>
</feature>
<feature type="binding site" evidence="1">
    <location>
        <position position="119"/>
    </location>
    <ligand>
        <name>dCTP</name>
        <dbReference type="ChEBI" id="CHEBI:61481"/>
    </ligand>
</feature>
<feature type="binding site" evidence="1">
    <location>
        <begin position="127"/>
        <end position="129"/>
    </location>
    <ligand>
        <name>dCTP</name>
        <dbReference type="ChEBI" id="CHEBI:61481"/>
    </ligand>
</feature>
<feature type="binding site" evidence="1">
    <location>
        <position position="148"/>
    </location>
    <ligand>
        <name>dCTP</name>
        <dbReference type="ChEBI" id="CHEBI:61481"/>
    </ligand>
</feature>
<feature type="binding site" evidence="1">
    <location>
        <position position="162"/>
    </location>
    <ligand>
        <name>dCTP</name>
        <dbReference type="ChEBI" id="CHEBI:61481"/>
    </ligand>
</feature>
<feature type="binding site" evidence="1">
    <location>
        <position position="174"/>
    </location>
    <ligand>
        <name>dCTP</name>
        <dbReference type="ChEBI" id="CHEBI:61481"/>
    </ligand>
</feature>
<feature type="site" description="Important for bifunctional activity" evidence="1">
    <location>
        <begin position="116"/>
        <end position="117"/>
    </location>
</feature>
<keyword id="KW-0378">Hydrolase</keyword>
<keyword id="KW-0546">Nucleotide metabolism</keyword>
<keyword id="KW-0547">Nucleotide-binding</keyword>
<dbReference type="EC" id="3.5.4.30" evidence="1"/>
<dbReference type="EMBL" id="CP000850">
    <property type="protein sequence ID" value="ABV95997.1"/>
    <property type="molecule type" value="Genomic_DNA"/>
</dbReference>
<dbReference type="SMR" id="A8LWH4"/>
<dbReference type="STRING" id="391037.Sare_0061"/>
<dbReference type="KEGG" id="saq:Sare_0061"/>
<dbReference type="PATRIC" id="fig|391037.6.peg.64"/>
<dbReference type="eggNOG" id="COG0717">
    <property type="taxonomic scope" value="Bacteria"/>
</dbReference>
<dbReference type="HOGENOM" id="CLU_087476_2_0_11"/>
<dbReference type="OrthoDB" id="9780956at2"/>
<dbReference type="UniPathway" id="UPA00610">
    <property type="reaction ID" value="UER00667"/>
</dbReference>
<dbReference type="GO" id="GO:0033973">
    <property type="term" value="F:dCTP deaminase (dUMP-forming) activity"/>
    <property type="evidence" value="ECO:0007669"/>
    <property type="project" value="UniProtKB-UniRule"/>
</dbReference>
<dbReference type="GO" id="GO:0008829">
    <property type="term" value="F:dCTP deaminase activity"/>
    <property type="evidence" value="ECO:0007669"/>
    <property type="project" value="InterPro"/>
</dbReference>
<dbReference type="GO" id="GO:0000166">
    <property type="term" value="F:nucleotide binding"/>
    <property type="evidence" value="ECO:0007669"/>
    <property type="project" value="UniProtKB-KW"/>
</dbReference>
<dbReference type="GO" id="GO:0006226">
    <property type="term" value="P:dUMP biosynthetic process"/>
    <property type="evidence" value="ECO:0007669"/>
    <property type="project" value="UniProtKB-UniRule"/>
</dbReference>
<dbReference type="GO" id="GO:0006229">
    <property type="term" value="P:dUTP biosynthetic process"/>
    <property type="evidence" value="ECO:0007669"/>
    <property type="project" value="InterPro"/>
</dbReference>
<dbReference type="GO" id="GO:0015949">
    <property type="term" value="P:nucleobase-containing small molecule interconversion"/>
    <property type="evidence" value="ECO:0007669"/>
    <property type="project" value="TreeGrafter"/>
</dbReference>
<dbReference type="CDD" id="cd07557">
    <property type="entry name" value="trimeric_dUTPase"/>
    <property type="match status" value="1"/>
</dbReference>
<dbReference type="FunFam" id="2.70.40.10:FF:000005">
    <property type="entry name" value="dCTP deaminase, dUMP-forming"/>
    <property type="match status" value="1"/>
</dbReference>
<dbReference type="Gene3D" id="2.70.40.10">
    <property type="match status" value="1"/>
</dbReference>
<dbReference type="HAMAP" id="MF_00146">
    <property type="entry name" value="dCTP_deaminase"/>
    <property type="match status" value="1"/>
</dbReference>
<dbReference type="InterPro" id="IPR011962">
    <property type="entry name" value="dCTP_deaminase"/>
</dbReference>
<dbReference type="InterPro" id="IPR036157">
    <property type="entry name" value="dUTPase-like_sf"/>
</dbReference>
<dbReference type="InterPro" id="IPR033704">
    <property type="entry name" value="dUTPase_trimeric"/>
</dbReference>
<dbReference type="NCBIfam" id="TIGR02274">
    <property type="entry name" value="dCTP_deam"/>
    <property type="match status" value="1"/>
</dbReference>
<dbReference type="PANTHER" id="PTHR42680">
    <property type="entry name" value="DCTP DEAMINASE"/>
    <property type="match status" value="1"/>
</dbReference>
<dbReference type="PANTHER" id="PTHR42680:SF3">
    <property type="entry name" value="DCTP DEAMINASE"/>
    <property type="match status" value="1"/>
</dbReference>
<dbReference type="Pfam" id="PF22769">
    <property type="entry name" value="DCD"/>
    <property type="match status" value="1"/>
</dbReference>
<dbReference type="SUPFAM" id="SSF51283">
    <property type="entry name" value="dUTPase-like"/>
    <property type="match status" value="1"/>
</dbReference>
<sequence>MLLSDRDLAAEIKAGTLALEPFDPALVQPSSIDVRLDKLFRVFNNHLYTHIDPSRQQDDLTSTVEVPAGEPFVLHPGEFVLASTLEVISLGDQLAGRLEGKSSLGRLGLLTHSTAGFIDPGFSGHVTLELSNVANLPIMLWPGMKIGQLCIFRLSSPAEYPYGSAVYGSRYQGQRGPTPSRSWQSWHTWPTR</sequence>
<protein>
    <recommendedName>
        <fullName evidence="1">dCTP deaminase, dUMP-forming</fullName>
        <ecNumber evidence="1">3.5.4.30</ecNumber>
    </recommendedName>
    <alternativeName>
        <fullName evidence="1">Bifunctional dCTP deaminase:dUTPase</fullName>
    </alternativeName>
    <alternativeName>
        <fullName evidence="1">DCD-DUT</fullName>
    </alternativeName>
</protein>
<proteinExistence type="inferred from homology"/>
<gene>
    <name evidence="1" type="primary">dcd</name>
    <name type="ordered locus">Sare_0061</name>
</gene>